<keyword id="KW-0002">3D-structure</keyword>
<keyword id="KW-0106">Calcium</keyword>
<keyword id="KW-0209">Deafness</keyword>
<keyword id="KW-0903">Direct protein sequencing</keyword>
<keyword id="KW-1015">Disulfide bond</keyword>
<keyword id="KW-0248">Ehlers-Danlos syndrome</keyword>
<keyword id="KW-0256">Endoplasmic reticulum</keyword>
<keyword id="KW-0325">Glycoprotein</keyword>
<keyword id="KW-0413">Isomerase</keyword>
<keyword id="KW-0479">Metal-binding</keyword>
<keyword id="KW-1267">Proteomics identification</keyword>
<keyword id="KW-1185">Reference proteome</keyword>
<keyword id="KW-0677">Repeat</keyword>
<keyword id="KW-0697">Rotamase</keyword>
<keyword id="KW-0732">Signal</keyword>
<gene>
    <name type="primary">FKBP14</name>
    <name type="synonym">FKBP22</name>
    <name type="ORF">UNQ322/PRO381</name>
</gene>
<reference key="1">
    <citation type="journal article" date="2003" name="Genome Res.">
        <title>The secreted protein discovery initiative (SPDI), a large-scale effort to identify novel human secreted and transmembrane proteins: a bioinformatics assessment.</title>
        <authorList>
            <person name="Clark H.F."/>
            <person name="Gurney A.L."/>
            <person name="Abaya E."/>
            <person name="Baker K."/>
            <person name="Baldwin D.T."/>
            <person name="Brush J."/>
            <person name="Chen J."/>
            <person name="Chow B."/>
            <person name="Chui C."/>
            <person name="Crowley C."/>
            <person name="Currell B."/>
            <person name="Deuel B."/>
            <person name="Dowd P."/>
            <person name="Eaton D."/>
            <person name="Foster J.S."/>
            <person name="Grimaldi C."/>
            <person name="Gu Q."/>
            <person name="Hass P.E."/>
            <person name="Heldens S."/>
            <person name="Huang A."/>
            <person name="Kim H.S."/>
            <person name="Klimowski L."/>
            <person name="Jin Y."/>
            <person name="Johnson S."/>
            <person name="Lee J."/>
            <person name="Lewis L."/>
            <person name="Liao D."/>
            <person name="Mark M.R."/>
            <person name="Robbie E."/>
            <person name="Sanchez C."/>
            <person name="Schoenfeld J."/>
            <person name="Seshagiri S."/>
            <person name="Simmons L."/>
            <person name="Singh J."/>
            <person name="Smith V."/>
            <person name="Stinson J."/>
            <person name="Vagts A."/>
            <person name="Vandlen R.L."/>
            <person name="Watanabe C."/>
            <person name="Wieand D."/>
            <person name="Woods K."/>
            <person name="Xie M.-H."/>
            <person name="Yansura D.G."/>
            <person name="Yi S."/>
            <person name="Yu G."/>
            <person name="Yuan J."/>
            <person name="Zhang M."/>
            <person name="Zhang Z."/>
            <person name="Goddard A.D."/>
            <person name="Wood W.I."/>
            <person name="Godowski P.J."/>
            <person name="Gray A.M."/>
        </authorList>
    </citation>
    <scope>NUCLEOTIDE SEQUENCE [LARGE SCALE MRNA]</scope>
</reference>
<reference key="2">
    <citation type="journal article" date="2004" name="Nat. Genet.">
        <title>Complete sequencing and characterization of 21,243 full-length human cDNAs.</title>
        <authorList>
            <person name="Ota T."/>
            <person name="Suzuki Y."/>
            <person name="Nishikawa T."/>
            <person name="Otsuki T."/>
            <person name="Sugiyama T."/>
            <person name="Irie R."/>
            <person name="Wakamatsu A."/>
            <person name="Hayashi K."/>
            <person name="Sato H."/>
            <person name="Nagai K."/>
            <person name="Kimura K."/>
            <person name="Makita H."/>
            <person name="Sekine M."/>
            <person name="Obayashi M."/>
            <person name="Nishi T."/>
            <person name="Shibahara T."/>
            <person name="Tanaka T."/>
            <person name="Ishii S."/>
            <person name="Yamamoto J."/>
            <person name="Saito K."/>
            <person name="Kawai Y."/>
            <person name="Isono Y."/>
            <person name="Nakamura Y."/>
            <person name="Nagahari K."/>
            <person name="Murakami K."/>
            <person name="Yasuda T."/>
            <person name="Iwayanagi T."/>
            <person name="Wagatsuma M."/>
            <person name="Shiratori A."/>
            <person name="Sudo H."/>
            <person name="Hosoiri T."/>
            <person name="Kaku Y."/>
            <person name="Kodaira H."/>
            <person name="Kondo H."/>
            <person name="Sugawara M."/>
            <person name="Takahashi M."/>
            <person name="Kanda K."/>
            <person name="Yokoi T."/>
            <person name="Furuya T."/>
            <person name="Kikkawa E."/>
            <person name="Omura Y."/>
            <person name="Abe K."/>
            <person name="Kamihara K."/>
            <person name="Katsuta N."/>
            <person name="Sato K."/>
            <person name="Tanikawa M."/>
            <person name="Yamazaki M."/>
            <person name="Ninomiya K."/>
            <person name="Ishibashi T."/>
            <person name="Yamashita H."/>
            <person name="Murakawa K."/>
            <person name="Fujimori K."/>
            <person name="Tanai H."/>
            <person name="Kimata M."/>
            <person name="Watanabe M."/>
            <person name="Hiraoka S."/>
            <person name="Chiba Y."/>
            <person name="Ishida S."/>
            <person name="Ono Y."/>
            <person name="Takiguchi S."/>
            <person name="Watanabe S."/>
            <person name="Yosida M."/>
            <person name="Hotuta T."/>
            <person name="Kusano J."/>
            <person name="Kanehori K."/>
            <person name="Takahashi-Fujii A."/>
            <person name="Hara H."/>
            <person name="Tanase T.-O."/>
            <person name="Nomura Y."/>
            <person name="Togiya S."/>
            <person name="Komai F."/>
            <person name="Hara R."/>
            <person name="Takeuchi K."/>
            <person name="Arita M."/>
            <person name="Imose N."/>
            <person name="Musashino K."/>
            <person name="Yuuki H."/>
            <person name="Oshima A."/>
            <person name="Sasaki N."/>
            <person name="Aotsuka S."/>
            <person name="Yoshikawa Y."/>
            <person name="Matsunawa H."/>
            <person name="Ichihara T."/>
            <person name="Shiohata N."/>
            <person name="Sano S."/>
            <person name="Moriya S."/>
            <person name="Momiyama H."/>
            <person name="Satoh N."/>
            <person name="Takami S."/>
            <person name="Terashima Y."/>
            <person name="Suzuki O."/>
            <person name="Nakagawa S."/>
            <person name="Senoh A."/>
            <person name="Mizoguchi H."/>
            <person name="Goto Y."/>
            <person name="Shimizu F."/>
            <person name="Wakebe H."/>
            <person name="Hishigaki H."/>
            <person name="Watanabe T."/>
            <person name="Sugiyama A."/>
            <person name="Takemoto M."/>
            <person name="Kawakami B."/>
            <person name="Yamazaki M."/>
            <person name="Watanabe K."/>
            <person name="Kumagai A."/>
            <person name="Itakura S."/>
            <person name="Fukuzumi Y."/>
            <person name="Fujimori Y."/>
            <person name="Komiyama M."/>
            <person name="Tashiro H."/>
            <person name="Tanigami A."/>
            <person name="Fujiwara T."/>
            <person name="Ono T."/>
            <person name="Yamada K."/>
            <person name="Fujii Y."/>
            <person name="Ozaki K."/>
            <person name="Hirao M."/>
            <person name="Ohmori Y."/>
            <person name="Kawabata A."/>
            <person name="Hikiji T."/>
            <person name="Kobatake N."/>
            <person name="Inagaki H."/>
            <person name="Ikema Y."/>
            <person name="Okamoto S."/>
            <person name="Okitani R."/>
            <person name="Kawakami T."/>
            <person name="Noguchi S."/>
            <person name="Itoh T."/>
            <person name="Shigeta K."/>
            <person name="Senba T."/>
            <person name="Matsumura K."/>
            <person name="Nakajima Y."/>
            <person name="Mizuno T."/>
            <person name="Morinaga M."/>
            <person name="Sasaki M."/>
            <person name="Togashi T."/>
            <person name="Oyama M."/>
            <person name="Hata H."/>
            <person name="Watanabe M."/>
            <person name="Komatsu T."/>
            <person name="Mizushima-Sugano J."/>
            <person name="Satoh T."/>
            <person name="Shirai Y."/>
            <person name="Takahashi Y."/>
            <person name="Nakagawa K."/>
            <person name="Okumura K."/>
            <person name="Nagase T."/>
            <person name="Nomura N."/>
            <person name="Kikuchi H."/>
            <person name="Masuho Y."/>
            <person name="Yamashita R."/>
            <person name="Nakai K."/>
            <person name="Yada T."/>
            <person name="Nakamura Y."/>
            <person name="Ohara O."/>
            <person name="Isogai T."/>
            <person name="Sugano S."/>
        </authorList>
    </citation>
    <scope>NUCLEOTIDE SEQUENCE [LARGE SCALE MRNA]</scope>
</reference>
<reference key="3">
    <citation type="journal article" date="2004" name="Genome Res.">
        <title>The status, quality, and expansion of the NIH full-length cDNA project: the Mammalian Gene Collection (MGC).</title>
        <authorList>
            <consortium name="The MGC Project Team"/>
        </authorList>
    </citation>
    <scope>NUCLEOTIDE SEQUENCE [LARGE SCALE MRNA]</scope>
    <source>
        <tissue>Kidney</tissue>
    </source>
</reference>
<reference key="4">
    <citation type="journal article" date="2004" name="Protein Sci.">
        <title>Signal peptide prediction based on analysis of experimentally verified cleavage sites.</title>
        <authorList>
            <person name="Zhang Z."/>
            <person name="Henzel W.J."/>
        </authorList>
    </citation>
    <scope>PROTEIN SEQUENCE OF 20-34</scope>
</reference>
<reference key="5">
    <citation type="journal article" date="2012" name="Am. J. Hum. Genet.">
        <title>Mutations in FKBP14 cause a variant of Ehlers-Danlos syndrome with progressive kyphoscoliosis, myopathy, and hearing loss.</title>
        <authorList>
            <person name="Baumann M."/>
            <person name="Giunta C."/>
            <person name="Krabichler B."/>
            <person name="Ruschendorf F."/>
            <person name="Zoppi N."/>
            <person name="Colombi M."/>
            <person name="Bittner R.E."/>
            <person name="Quijano-Roy S."/>
            <person name="Muntoni F."/>
            <person name="Cirak S."/>
            <person name="Schreiber G."/>
            <person name="Zou Y."/>
            <person name="Hu Y."/>
            <person name="Romero N.B."/>
            <person name="Carlier R.Y."/>
            <person name="Amberger A."/>
            <person name="Deutschmann A."/>
            <person name="Straub V."/>
            <person name="Rohrbach M."/>
            <person name="Steinmann B."/>
            <person name="Rostasy K."/>
            <person name="Karall D."/>
            <person name="Bonnemann C.G."/>
            <person name="Zschocke J."/>
            <person name="Fauth C."/>
        </authorList>
    </citation>
    <scope>INVOLVEMENT IN EDSKSCL2</scope>
    <scope>SUBCELLULAR LOCATION</scope>
</reference>
<reference key="6">
    <citation type="journal article" date="2014" name="J. Biol. Chem.">
        <title>A substrate preference for the rough endoplasmic reticulum resident protein FKBP22 during collagen biosynthesis.</title>
        <authorList>
            <person name="Ishikawa Y."/>
            <person name="Baechinger H.P."/>
        </authorList>
    </citation>
    <scope>FUNCTION</scope>
    <scope>CATALYTIC ACTIVITY</scope>
    <scope>ACTIVITY REGULATION</scope>
    <scope>SUBUNIT</scope>
    <scope>CALCIUM BINDING</scope>
    <scope>PRESENCE OF DISULFIDE BOND</scope>
</reference>
<reference evidence="11" key="7">
    <citation type="submission" date="2012-01" db="PDB data bank">
        <title>Crystal structure of human peptidyl-prolyl cis-trans isomerase FKBP14.</title>
        <authorList>
            <person name="Krojer T."/>
            <person name="Kiyani W."/>
            <person name="Goubin S."/>
            <person name="Muniz J.R.C."/>
            <person name="Filippakopoulos P."/>
            <person name="Arrowsmith C.H."/>
            <person name="Edwards A."/>
            <person name="Bountra C."/>
            <person name="von Delft F."/>
            <person name="Oppermann U."/>
            <person name="Zschocke J."/>
            <person name="Yue W.W."/>
        </authorList>
    </citation>
    <scope>X-RAY CRYSTALLOGRAPHY (1.82 ANGSTROMS) OF 19-138</scope>
    <scope>DISULFIDE BOND</scope>
</reference>
<reference evidence="12" key="8">
    <citation type="journal article" date="2014" name="Protein Sci.">
        <title>Structure of human peptidyl-prolyl cis-trans isomerase FKBP22 containing two EF-hand motifs.</title>
        <authorList>
            <person name="Boudko S.P."/>
            <person name="Ishikawa Y."/>
            <person name="Nix J."/>
            <person name="Chapman M.S."/>
            <person name="Bachinger H.P."/>
        </authorList>
    </citation>
    <scope>X-RAY CRYSTALLOGRAPHY (1.90 ANGSTROMS) OF 21-211 IN COMPLEX WITH CALCIUM</scope>
    <scope>SUBUNIT</scope>
    <scope>DISULFIDE BOND</scope>
</reference>
<proteinExistence type="evidence at protein level"/>
<feature type="signal peptide" evidence="5">
    <location>
        <begin position="1"/>
        <end position="19"/>
    </location>
</feature>
<feature type="chain" id="PRO_0000025521" description="Peptidyl-prolyl cis-trans isomerase FKBP14">
    <location>
        <begin position="20"/>
        <end position="211"/>
    </location>
</feature>
<feature type="domain" description="PPIase FKBP-type" evidence="2">
    <location>
        <begin position="45"/>
        <end position="135"/>
    </location>
</feature>
<feature type="domain" description="EF-hand 1" evidence="3">
    <location>
        <begin position="135"/>
        <end position="170"/>
    </location>
</feature>
<feature type="domain" description="EF-hand 2" evidence="3">
    <location>
        <begin position="179"/>
        <end position="211"/>
    </location>
</feature>
<feature type="short sequence motif" description="Prevents secretion from ER" evidence="4">
    <location>
        <begin position="208"/>
        <end position="211"/>
    </location>
</feature>
<feature type="binding site" evidence="7 10 12">
    <location>
        <position position="148"/>
    </location>
    <ligand>
        <name>Ca(2+)</name>
        <dbReference type="ChEBI" id="CHEBI:29108"/>
        <label>1</label>
    </ligand>
</feature>
<feature type="binding site" evidence="7 10 12">
    <location>
        <position position="150"/>
    </location>
    <ligand>
        <name>Ca(2+)</name>
        <dbReference type="ChEBI" id="CHEBI:29108"/>
        <label>1</label>
    </ligand>
</feature>
<feature type="binding site" evidence="7 10 12">
    <location>
        <position position="152"/>
    </location>
    <ligand>
        <name>Ca(2+)</name>
        <dbReference type="ChEBI" id="CHEBI:29108"/>
        <label>1</label>
    </ligand>
</feature>
<feature type="binding site" evidence="7 10 12">
    <location>
        <position position="154"/>
    </location>
    <ligand>
        <name>Ca(2+)</name>
        <dbReference type="ChEBI" id="CHEBI:29108"/>
        <label>1</label>
    </ligand>
</feature>
<feature type="binding site" evidence="7 10 12">
    <location>
        <position position="159"/>
    </location>
    <ligand>
        <name>Ca(2+)</name>
        <dbReference type="ChEBI" id="CHEBI:29108"/>
        <label>1</label>
    </ligand>
</feature>
<feature type="binding site" evidence="3 7 10 12">
    <location>
        <position position="192"/>
    </location>
    <ligand>
        <name>Ca(2+)</name>
        <dbReference type="ChEBI" id="CHEBI:29108"/>
        <label>2</label>
    </ligand>
</feature>
<feature type="binding site" evidence="3 7 10 12">
    <location>
        <position position="194"/>
    </location>
    <ligand>
        <name>Ca(2+)</name>
        <dbReference type="ChEBI" id="CHEBI:29108"/>
        <label>2</label>
    </ligand>
</feature>
<feature type="binding site" evidence="3 7 10 12">
    <location>
        <position position="196"/>
    </location>
    <ligand>
        <name>Ca(2+)</name>
        <dbReference type="ChEBI" id="CHEBI:29108"/>
        <label>2</label>
    </ligand>
</feature>
<feature type="binding site" evidence="7 10 12">
    <location>
        <position position="198"/>
    </location>
    <ligand>
        <name>Ca(2+)</name>
        <dbReference type="ChEBI" id="CHEBI:29108"/>
        <label>2</label>
    </ligand>
</feature>
<feature type="binding site" evidence="3 7 10 12">
    <location>
        <position position="203"/>
    </location>
    <ligand>
        <name>Ca(2+)</name>
        <dbReference type="ChEBI" id="CHEBI:29108"/>
        <label>2</label>
    </ligand>
</feature>
<feature type="glycosylation site" description="N-linked (GlcNAc...) asparagine" evidence="1">
    <location>
        <position position="176"/>
    </location>
</feature>
<feature type="disulfide bond" evidence="9 10 11 12">
    <location>
        <begin position="38"/>
        <end position="96"/>
    </location>
</feature>
<feature type="helix" evidence="13">
    <location>
        <begin position="19"/>
        <end position="21"/>
    </location>
</feature>
<feature type="strand" evidence="13">
    <location>
        <begin position="28"/>
        <end position="33"/>
    </location>
</feature>
<feature type="strand" evidence="13">
    <location>
        <begin position="47"/>
        <end position="56"/>
    </location>
</feature>
<feature type="turn" evidence="13">
    <location>
        <begin position="57"/>
        <end position="59"/>
    </location>
</feature>
<feature type="strand" evidence="13">
    <location>
        <begin position="62"/>
        <end position="65"/>
    </location>
</feature>
<feature type="helix" evidence="13">
    <location>
        <begin position="66"/>
        <end position="69"/>
    </location>
</feature>
<feature type="turn" evidence="13">
    <location>
        <begin position="70"/>
        <end position="72"/>
    </location>
</feature>
<feature type="strand" evidence="13">
    <location>
        <begin position="75"/>
        <end position="78"/>
    </location>
</feature>
<feature type="turn" evidence="14">
    <location>
        <begin position="79"/>
        <end position="82"/>
    </location>
</feature>
<feature type="helix" evidence="13">
    <location>
        <begin position="86"/>
        <end position="91"/>
    </location>
</feature>
<feature type="strand" evidence="13">
    <location>
        <begin position="100"/>
        <end position="105"/>
    </location>
</feature>
<feature type="helix" evidence="13">
    <location>
        <begin position="107"/>
        <end position="109"/>
    </location>
</feature>
<feature type="turn" evidence="13">
    <location>
        <begin position="110"/>
        <end position="114"/>
    </location>
</feature>
<feature type="strand" evidence="13">
    <location>
        <begin position="125"/>
        <end position="135"/>
    </location>
</feature>
<feature type="helix" evidence="14">
    <location>
        <begin position="141"/>
        <end position="147"/>
    </location>
</feature>
<feature type="strand" evidence="14">
    <location>
        <begin position="152"/>
        <end position="156"/>
    </location>
</feature>
<feature type="helix" evidence="14">
    <location>
        <begin position="157"/>
        <end position="170"/>
    </location>
</feature>
<feature type="helix" evidence="14">
    <location>
        <begin position="177"/>
        <end position="191"/>
    </location>
</feature>
<feature type="strand" evidence="14">
    <location>
        <begin position="196"/>
        <end position="200"/>
    </location>
</feature>
<feature type="helix" evidence="14">
    <location>
        <begin position="201"/>
        <end position="205"/>
    </location>
</feature>
<comment type="function">
    <text evidence="8">PPIase which accelerates the folding of proteins during protein synthesis. Has a preference for substrates containing 4-hydroxylproline modifications, including type III collagen. May also target type VI and type X collagens.</text>
</comment>
<comment type="catalytic activity">
    <reaction evidence="8">
        <text>[protein]-peptidylproline (omega=180) = [protein]-peptidylproline (omega=0)</text>
        <dbReference type="Rhea" id="RHEA:16237"/>
        <dbReference type="Rhea" id="RHEA-COMP:10747"/>
        <dbReference type="Rhea" id="RHEA-COMP:10748"/>
        <dbReference type="ChEBI" id="CHEBI:83833"/>
        <dbReference type="ChEBI" id="CHEBI:83834"/>
        <dbReference type="EC" id="5.2.1.8"/>
    </reaction>
</comment>
<comment type="activity regulation">
    <text evidence="8">Inhibited by tacrolimus/FK506.</text>
</comment>
<comment type="subunit">
    <text evidence="7 8">Monomer (PubMed:24272907, PubMed:24821723). Homodimer (PubMed:24272907, PubMed:24821723). Interacts with type III, type IV and type X collagens (PubMed:24821723).</text>
</comment>
<comment type="interaction">
    <interactant intactId="EBI-2477093">
        <id>Q9NWM8</id>
    </interactant>
    <interactant intactId="EBI-3922408">
        <id>Q9Y231</id>
        <label>FUT9</label>
    </interactant>
    <organismsDiffer>false</organismsDiffer>
    <experiments>2</experiments>
</comment>
<comment type="interaction">
    <interactant intactId="EBI-2477093">
        <id>Q9NWM8</id>
    </interactant>
    <interactant intactId="EBI-7108503">
        <id>P29622</id>
        <label>SERPINA4</label>
    </interactant>
    <organismsDiffer>false</organismsDiffer>
    <experiments>2</experiments>
</comment>
<comment type="interaction">
    <interactant intactId="EBI-2477093">
        <id>Q9NWM8</id>
    </interactant>
    <interactant intactId="EBI-10982110">
        <id>Q96Q45-2</id>
        <label>TMEM237</label>
    </interactant>
    <organismsDiffer>false</organismsDiffer>
    <experiments>3</experiments>
</comment>
<comment type="subcellular location">
    <subcellularLocation>
        <location evidence="4 6">Endoplasmic reticulum lumen</location>
    </subcellularLocation>
</comment>
<comment type="disease" evidence="6">
    <disease id="DI-03408">
        <name>Ehlers-Danlos syndrome, kyphoscoliotic type, 2</name>
        <acronym>EDSKSCL2</acronym>
        <description>A form of Ehlers-Danlos syndrome, a group of connective tissue disorders characterized by skin hyperextensibility, articular hypermobility, and tissue fragility. EDSKSCL2 is an autosomal recessive form characterized by severe generalized hypotonia at birth, myopathy, early-onset progressive kyphoscoliosis, joint hypermobility without contractures, hyperelastic skin with follicular hyperkeratosis, easy bruising, and occasional abnormal scarring, sensorineural hearing impairment, and normal pyridinoline excretion in urine.</description>
        <dbReference type="MIM" id="614557"/>
    </disease>
    <text>The disease is caused by variants affecting the gene represented in this entry.</text>
</comment>
<protein>
    <recommendedName>
        <fullName>Peptidyl-prolyl cis-trans isomerase FKBP14</fullName>
        <shortName>PPIase FKBP14</shortName>
        <ecNumber evidence="8">5.2.1.8</ecNumber>
    </recommendedName>
    <alternativeName>
        <fullName>22 kDa FK506-binding protein</fullName>
        <shortName>22 kDa FKBP</shortName>
        <shortName>FKBP-22</shortName>
    </alternativeName>
    <alternativeName>
        <fullName>FK506-binding protein 14</fullName>
        <shortName>FKBP-14</shortName>
    </alternativeName>
    <alternativeName>
        <fullName>Rotamase</fullName>
    </alternativeName>
</protein>
<name>FKB14_HUMAN</name>
<evidence type="ECO:0000255" key="1"/>
<evidence type="ECO:0000255" key="2">
    <source>
        <dbReference type="PROSITE-ProRule" id="PRU00277"/>
    </source>
</evidence>
<evidence type="ECO:0000255" key="3">
    <source>
        <dbReference type="PROSITE-ProRule" id="PRU00448"/>
    </source>
</evidence>
<evidence type="ECO:0000255" key="4">
    <source>
        <dbReference type="PROSITE-ProRule" id="PRU10138"/>
    </source>
</evidence>
<evidence type="ECO:0000269" key="5">
    <source>
    </source>
</evidence>
<evidence type="ECO:0000269" key="6">
    <source>
    </source>
</evidence>
<evidence type="ECO:0000269" key="7">
    <source>
    </source>
</evidence>
<evidence type="ECO:0000269" key="8">
    <source>
    </source>
</evidence>
<evidence type="ECO:0000269" key="9">
    <source ref="7"/>
</evidence>
<evidence type="ECO:0000305" key="10">
    <source>
    </source>
</evidence>
<evidence type="ECO:0007744" key="11">
    <source>
        <dbReference type="PDB" id="4DIP"/>
    </source>
</evidence>
<evidence type="ECO:0007744" key="12">
    <source>
        <dbReference type="PDB" id="4MSP"/>
    </source>
</evidence>
<evidence type="ECO:0007829" key="13">
    <source>
        <dbReference type="PDB" id="4DIP"/>
    </source>
</evidence>
<evidence type="ECO:0007829" key="14">
    <source>
        <dbReference type="PDB" id="4MSP"/>
    </source>
</evidence>
<accession>Q9NWM8</accession>
<organism>
    <name type="scientific">Homo sapiens</name>
    <name type="common">Human</name>
    <dbReference type="NCBI Taxonomy" id="9606"/>
    <lineage>
        <taxon>Eukaryota</taxon>
        <taxon>Metazoa</taxon>
        <taxon>Chordata</taxon>
        <taxon>Craniata</taxon>
        <taxon>Vertebrata</taxon>
        <taxon>Euteleostomi</taxon>
        <taxon>Mammalia</taxon>
        <taxon>Eutheria</taxon>
        <taxon>Euarchontoglires</taxon>
        <taxon>Primates</taxon>
        <taxon>Haplorrhini</taxon>
        <taxon>Catarrhini</taxon>
        <taxon>Hominidae</taxon>
        <taxon>Homo</taxon>
    </lineage>
</organism>
<sequence>MRLFLWNAVLTLFVTSLIGALIPEPEVKIEVLQKPFICHRKTKGGDLMLVHYEGYLEKDGSLFHSTHKHNNGQPIWFTLGILEALKGWDQGLKGMCVGEKRKLIIPPALGYGKEGKGKIPPESTLIFNIDLLEIRNGPRSHESFQEMDLNDDWKLSKDEVKAYLKKEFEKHGAVVNESHHDALVEDIFDKEDEDKDGFISAREFTYKHDEL</sequence>
<dbReference type="EC" id="5.2.1.8" evidence="8"/>
<dbReference type="EMBL" id="AY358643">
    <property type="protein sequence ID" value="AAQ89006.1"/>
    <property type="molecule type" value="mRNA"/>
</dbReference>
<dbReference type="EMBL" id="AK000738">
    <property type="protein sequence ID" value="BAA91351.1"/>
    <property type="molecule type" value="mRNA"/>
</dbReference>
<dbReference type="EMBL" id="BC005206">
    <property type="protein sequence ID" value="AAH05206.1"/>
    <property type="molecule type" value="mRNA"/>
</dbReference>
<dbReference type="CCDS" id="CCDS5423.1"/>
<dbReference type="RefSeq" id="NP_060416.1">
    <property type="nucleotide sequence ID" value="NM_017946.4"/>
</dbReference>
<dbReference type="PDB" id="4DIP">
    <property type="method" value="X-ray"/>
    <property type="resolution" value="1.82 A"/>
    <property type="chains" value="A/B/C/D/E/F/G/H/I/J=19-138"/>
</dbReference>
<dbReference type="PDB" id="4MSP">
    <property type="method" value="X-ray"/>
    <property type="resolution" value="1.90 A"/>
    <property type="chains" value="A/B=21-211"/>
</dbReference>
<dbReference type="PDBsum" id="4DIP"/>
<dbReference type="PDBsum" id="4MSP"/>
<dbReference type="SMR" id="Q9NWM8"/>
<dbReference type="BioGRID" id="120362">
    <property type="interactions" value="94"/>
</dbReference>
<dbReference type="FunCoup" id="Q9NWM8">
    <property type="interactions" value="187"/>
</dbReference>
<dbReference type="IntAct" id="Q9NWM8">
    <property type="interactions" value="73"/>
</dbReference>
<dbReference type="MINT" id="Q9NWM8"/>
<dbReference type="STRING" id="9606.ENSP00000222803"/>
<dbReference type="BindingDB" id="Q9NWM8"/>
<dbReference type="ChEMBL" id="CHEMBL2342"/>
<dbReference type="GlyCosmos" id="Q9NWM8">
    <property type="glycosylation" value="1 site, No reported glycans"/>
</dbReference>
<dbReference type="GlyGen" id="Q9NWM8">
    <property type="glycosylation" value="1 site, 8 N-linked glycans (1 site)"/>
</dbReference>
<dbReference type="iPTMnet" id="Q9NWM8"/>
<dbReference type="PhosphoSitePlus" id="Q9NWM8"/>
<dbReference type="BioMuta" id="FKBP14"/>
<dbReference type="DMDM" id="23821568"/>
<dbReference type="jPOST" id="Q9NWM8"/>
<dbReference type="MassIVE" id="Q9NWM8"/>
<dbReference type="PaxDb" id="9606-ENSP00000222803"/>
<dbReference type="PeptideAtlas" id="Q9NWM8"/>
<dbReference type="ProteomicsDB" id="82955"/>
<dbReference type="Pumba" id="Q9NWM8"/>
<dbReference type="Antibodypedia" id="2831">
    <property type="antibodies" value="206 antibodies from 26 providers"/>
</dbReference>
<dbReference type="DNASU" id="55033"/>
<dbReference type="Ensembl" id="ENST00000222803.10">
    <property type="protein sequence ID" value="ENSP00000222803.5"/>
    <property type="gene ID" value="ENSG00000106080.11"/>
</dbReference>
<dbReference type="GeneID" id="55033"/>
<dbReference type="KEGG" id="hsa:55033"/>
<dbReference type="MANE-Select" id="ENST00000222803.10">
    <property type="protein sequence ID" value="ENSP00000222803.5"/>
    <property type="RefSeq nucleotide sequence ID" value="NM_017946.4"/>
    <property type="RefSeq protein sequence ID" value="NP_060416.1"/>
</dbReference>
<dbReference type="UCSC" id="uc003tal.3">
    <property type="organism name" value="human"/>
</dbReference>
<dbReference type="AGR" id="HGNC:18625"/>
<dbReference type="CTD" id="55033"/>
<dbReference type="DisGeNET" id="55033"/>
<dbReference type="GeneCards" id="FKBP14"/>
<dbReference type="GeneReviews" id="FKBP14"/>
<dbReference type="HGNC" id="HGNC:18625">
    <property type="gene designation" value="FKBP14"/>
</dbReference>
<dbReference type="HPA" id="ENSG00000106080">
    <property type="expression patterns" value="Low tissue specificity"/>
</dbReference>
<dbReference type="MalaCards" id="FKBP14"/>
<dbReference type="MIM" id="614505">
    <property type="type" value="gene"/>
</dbReference>
<dbReference type="MIM" id="614557">
    <property type="type" value="phenotype"/>
</dbReference>
<dbReference type="neXtProt" id="NX_Q9NWM8"/>
<dbReference type="OpenTargets" id="ENSG00000106080"/>
<dbReference type="Orphanet" id="300179">
    <property type="disease" value="Kyphoscoliotic Ehlers-Danlos syndrome due to FKBP22 deficiency"/>
</dbReference>
<dbReference type="PharmGKB" id="PA38608"/>
<dbReference type="VEuPathDB" id="HostDB:ENSG00000106080"/>
<dbReference type="eggNOG" id="KOG0549">
    <property type="taxonomic scope" value="Eukaryota"/>
</dbReference>
<dbReference type="GeneTree" id="ENSGT00940000157858"/>
<dbReference type="HOGENOM" id="CLU_013615_5_0_1"/>
<dbReference type="InParanoid" id="Q9NWM8"/>
<dbReference type="OMA" id="KQMCVGE"/>
<dbReference type="OrthoDB" id="1902587at2759"/>
<dbReference type="PAN-GO" id="Q9NWM8">
    <property type="GO annotations" value="0 GO annotations based on evolutionary models"/>
</dbReference>
<dbReference type="PhylomeDB" id="Q9NWM8"/>
<dbReference type="TreeFam" id="TF105296"/>
<dbReference type="BRENDA" id="5.2.1.8">
    <property type="organism ID" value="2681"/>
</dbReference>
<dbReference type="PathwayCommons" id="Q9NWM8"/>
<dbReference type="Reactome" id="R-HSA-381038">
    <property type="pathway name" value="XBP1(S) activates chaperone genes"/>
</dbReference>
<dbReference type="SignaLink" id="Q9NWM8"/>
<dbReference type="BioGRID-ORCS" id="55033">
    <property type="hits" value="11 hits in 1158 CRISPR screens"/>
</dbReference>
<dbReference type="ChiTaRS" id="FKBP14">
    <property type="organism name" value="human"/>
</dbReference>
<dbReference type="EvolutionaryTrace" id="Q9NWM8"/>
<dbReference type="GenomeRNAi" id="55033"/>
<dbReference type="Pharos" id="Q9NWM8">
    <property type="development level" value="Tbio"/>
</dbReference>
<dbReference type="PRO" id="PR:Q9NWM8"/>
<dbReference type="Proteomes" id="UP000005640">
    <property type="component" value="Chromosome 7"/>
</dbReference>
<dbReference type="RNAct" id="Q9NWM8">
    <property type="molecule type" value="protein"/>
</dbReference>
<dbReference type="Bgee" id="ENSG00000106080">
    <property type="expression patterns" value="Expressed in tibia and 181 other cell types or tissues"/>
</dbReference>
<dbReference type="ExpressionAtlas" id="Q9NWM8">
    <property type="expression patterns" value="baseline and differential"/>
</dbReference>
<dbReference type="GO" id="GO:0005788">
    <property type="term" value="C:endoplasmic reticulum lumen"/>
    <property type="evidence" value="ECO:0000304"/>
    <property type="project" value="Reactome"/>
</dbReference>
<dbReference type="GO" id="GO:0005509">
    <property type="term" value="F:calcium ion binding"/>
    <property type="evidence" value="ECO:0007669"/>
    <property type="project" value="InterPro"/>
</dbReference>
<dbReference type="GO" id="GO:0003755">
    <property type="term" value="F:peptidyl-prolyl cis-trans isomerase activity"/>
    <property type="evidence" value="ECO:0007669"/>
    <property type="project" value="UniProtKB-KW"/>
</dbReference>
<dbReference type="FunFam" id="3.10.50.40:FF:000006">
    <property type="entry name" value="Peptidyl-prolyl cis-trans isomerase"/>
    <property type="match status" value="1"/>
</dbReference>
<dbReference type="FunFam" id="1.10.238.10:FF:000118">
    <property type="entry name" value="Peptidylprolyl isomerase"/>
    <property type="match status" value="1"/>
</dbReference>
<dbReference type="Gene3D" id="3.10.50.40">
    <property type="match status" value="1"/>
</dbReference>
<dbReference type="Gene3D" id="1.10.238.10">
    <property type="entry name" value="EF-hand"/>
    <property type="match status" value="1"/>
</dbReference>
<dbReference type="InterPro" id="IPR011992">
    <property type="entry name" value="EF-hand-dom_pair"/>
</dbReference>
<dbReference type="InterPro" id="IPR018247">
    <property type="entry name" value="EF_Hand_1_Ca_BS"/>
</dbReference>
<dbReference type="InterPro" id="IPR002048">
    <property type="entry name" value="EF_hand_dom"/>
</dbReference>
<dbReference type="InterPro" id="IPR046357">
    <property type="entry name" value="PPIase_dom_sf"/>
</dbReference>
<dbReference type="InterPro" id="IPR052273">
    <property type="entry name" value="PPIase_FKBP"/>
</dbReference>
<dbReference type="InterPro" id="IPR001179">
    <property type="entry name" value="PPIase_FKBP_dom"/>
</dbReference>
<dbReference type="PANTHER" id="PTHR46222:SF1">
    <property type="entry name" value="PEPTIDYL-PROLYL CIS-TRANS ISOMERASE FKBP14"/>
    <property type="match status" value="1"/>
</dbReference>
<dbReference type="PANTHER" id="PTHR46222">
    <property type="entry name" value="PEPTIDYL-PROLYL CIS-TRANS ISOMERASE FKBP7/14"/>
    <property type="match status" value="1"/>
</dbReference>
<dbReference type="Pfam" id="PF00254">
    <property type="entry name" value="FKBP_C"/>
    <property type="match status" value="1"/>
</dbReference>
<dbReference type="SUPFAM" id="SSF47473">
    <property type="entry name" value="EF-hand"/>
    <property type="match status" value="1"/>
</dbReference>
<dbReference type="SUPFAM" id="SSF54534">
    <property type="entry name" value="FKBP-like"/>
    <property type="match status" value="1"/>
</dbReference>
<dbReference type="PROSITE" id="PS00018">
    <property type="entry name" value="EF_HAND_1"/>
    <property type="match status" value="1"/>
</dbReference>
<dbReference type="PROSITE" id="PS50222">
    <property type="entry name" value="EF_HAND_2"/>
    <property type="match status" value="2"/>
</dbReference>
<dbReference type="PROSITE" id="PS00014">
    <property type="entry name" value="ER_TARGET"/>
    <property type="match status" value="1"/>
</dbReference>
<dbReference type="PROSITE" id="PS50059">
    <property type="entry name" value="FKBP_PPIASE"/>
    <property type="match status" value="1"/>
</dbReference>